<comment type="subcellular location">
    <subcellularLocation>
        <location evidence="1">Cell membrane</location>
        <topology evidence="1">Multi-pass membrane protein</topology>
    </subcellularLocation>
</comment>
<comment type="similarity">
    <text evidence="1">Belongs to the UPF0391 family.</text>
</comment>
<comment type="sequence caution" evidence="2">
    <conflict type="erroneous initiation">
        <sequence resource="EMBL-CDS" id="AAV81537"/>
    </conflict>
</comment>
<reference key="1">
    <citation type="journal article" date="2004" name="Proc. Natl. Acad. Sci. U.S.A.">
        <title>Genome sequence of the deep-sea gamma-proteobacterium Idiomarina loihiensis reveals amino acid fermentation as a source of carbon and energy.</title>
        <authorList>
            <person name="Hou S."/>
            <person name="Saw J.H."/>
            <person name="Lee K.S."/>
            <person name="Freitas T.A."/>
            <person name="Belisle C."/>
            <person name="Kawarabayasi Y."/>
            <person name="Donachie S.P."/>
            <person name="Pikina A."/>
            <person name="Galperin M.Y."/>
            <person name="Koonin E.V."/>
            <person name="Makarova K.S."/>
            <person name="Omelchenko M.V."/>
            <person name="Sorokin A."/>
            <person name="Wolf Y.I."/>
            <person name="Li Q.X."/>
            <person name="Keum Y.S."/>
            <person name="Campbell S."/>
            <person name="Denery J."/>
            <person name="Aizawa S."/>
            <person name="Shibata S."/>
            <person name="Malahoff A."/>
            <person name="Alam M."/>
        </authorList>
    </citation>
    <scope>NUCLEOTIDE SEQUENCE [LARGE SCALE GENOMIC DNA]</scope>
    <source>
        <strain>ATCC BAA-735 / DSM 15497 / L2-TR</strain>
    </source>
</reference>
<name>Y696_IDILO</name>
<dbReference type="EMBL" id="AE017340">
    <property type="protein sequence ID" value="AAV81537.1"/>
    <property type="status" value="ALT_INIT"/>
    <property type="molecule type" value="Genomic_DNA"/>
</dbReference>
<dbReference type="STRING" id="283942.IL0696"/>
<dbReference type="KEGG" id="ilo:IL0696"/>
<dbReference type="eggNOG" id="COG5487">
    <property type="taxonomic scope" value="Bacteria"/>
</dbReference>
<dbReference type="HOGENOM" id="CLU_187346_1_0_6"/>
<dbReference type="Proteomes" id="UP000001171">
    <property type="component" value="Chromosome"/>
</dbReference>
<dbReference type="GO" id="GO:0005886">
    <property type="term" value="C:plasma membrane"/>
    <property type="evidence" value="ECO:0007669"/>
    <property type="project" value="UniProtKB-SubCell"/>
</dbReference>
<dbReference type="HAMAP" id="MF_01361">
    <property type="entry name" value="UPF0391"/>
    <property type="match status" value="1"/>
</dbReference>
<dbReference type="InterPro" id="IPR009760">
    <property type="entry name" value="DUF1328"/>
</dbReference>
<dbReference type="NCBIfam" id="NF010226">
    <property type="entry name" value="PRK13682.1-1"/>
    <property type="match status" value="1"/>
</dbReference>
<dbReference type="NCBIfam" id="NF010228">
    <property type="entry name" value="PRK13682.1-3"/>
    <property type="match status" value="1"/>
</dbReference>
<dbReference type="NCBIfam" id="NF010229">
    <property type="entry name" value="PRK13682.1-4"/>
    <property type="match status" value="1"/>
</dbReference>
<dbReference type="Pfam" id="PF07043">
    <property type="entry name" value="DUF1328"/>
    <property type="match status" value="1"/>
</dbReference>
<dbReference type="PIRSF" id="PIRSF036466">
    <property type="entry name" value="UCP036466"/>
    <property type="match status" value="1"/>
</dbReference>
<evidence type="ECO:0000255" key="1">
    <source>
        <dbReference type="HAMAP-Rule" id="MF_01361"/>
    </source>
</evidence>
<evidence type="ECO:0000305" key="2"/>
<organism>
    <name type="scientific">Idiomarina loihiensis (strain ATCC BAA-735 / DSM 15497 / L2-TR)</name>
    <dbReference type="NCBI Taxonomy" id="283942"/>
    <lineage>
        <taxon>Bacteria</taxon>
        <taxon>Pseudomonadati</taxon>
        <taxon>Pseudomonadota</taxon>
        <taxon>Gammaproteobacteria</taxon>
        <taxon>Alteromonadales</taxon>
        <taxon>Idiomarinaceae</taxon>
        <taxon>Idiomarina</taxon>
    </lineage>
</organism>
<protein>
    <recommendedName>
        <fullName evidence="1">UPF0391 membrane protein IL0696</fullName>
    </recommendedName>
</protein>
<gene>
    <name type="ordered locus">IL0696</name>
</gene>
<accession>Q5R0E0</accession>
<feature type="chain" id="PRO_0000256741" description="UPF0391 membrane protein IL0696">
    <location>
        <begin position="1"/>
        <end position="57"/>
    </location>
</feature>
<feature type="transmembrane region" description="Helical" evidence="1">
    <location>
        <begin position="4"/>
        <end position="24"/>
    </location>
</feature>
<feature type="transmembrane region" description="Helical" evidence="1">
    <location>
        <begin position="28"/>
        <end position="48"/>
    </location>
</feature>
<proteinExistence type="inferred from homology"/>
<keyword id="KW-1003">Cell membrane</keyword>
<keyword id="KW-0472">Membrane</keyword>
<keyword id="KW-1185">Reference proteome</keyword>
<keyword id="KW-0812">Transmembrane</keyword>
<keyword id="KW-1133">Transmembrane helix</keyword>
<sequence length="57" mass="6117">MLRWVLIFLAVAVVAAILGFGGIAGTAAGIAKIIFYIFIILFAISLVVRLLQGNKRL</sequence>